<name>CCR5_PONAB</name>
<feature type="chain" id="PRO_0000069275" description="C-C chemokine receptor type 5">
    <location>
        <begin position="1"/>
        <end position="352"/>
    </location>
</feature>
<feature type="topological domain" description="Extracellular" evidence="3">
    <location>
        <begin position="1"/>
        <end position="30"/>
    </location>
</feature>
<feature type="transmembrane region" description="Helical; Name=1" evidence="3">
    <location>
        <begin position="31"/>
        <end position="58"/>
    </location>
</feature>
<feature type="topological domain" description="Cytoplasmic" evidence="3">
    <location>
        <begin position="59"/>
        <end position="68"/>
    </location>
</feature>
<feature type="transmembrane region" description="Helical; Name=2" evidence="3">
    <location>
        <begin position="69"/>
        <end position="89"/>
    </location>
</feature>
<feature type="topological domain" description="Extracellular" evidence="3">
    <location>
        <begin position="90"/>
        <end position="102"/>
    </location>
</feature>
<feature type="transmembrane region" description="Helical; Name=3" evidence="3">
    <location>
        <begin position="103"/>
        <end position="124"/>
    </location>
</feature>
<feature type="topological domain" description="Cytoplasmic" evidence="3">
    <location>
        <begin position="125"/>
        <end position="141"/>
    </location>
</feature>
<feature type="transmembrane region" description="Helical; Name=4" evidence="3">
    <location>
        <begin position="142"/>
        <end position="166"/>
    </location>
</feature>
<feature type="topological domain" description="Extracellular" evidence="3">
    <location>
        <begin position="167"/>
        <end position="198"/>
    </location>
</feature>
<feature type="transmembrane region" description="Helical; Name=5" evidence="3">
    <location>
        <begin position="199"/>
        <end position="218"/>
    </location>
</feature>
<feature type="topological domain" description="Cytoplasmic" evidence="3">
    <location>
        <begin position="219"/>
        <end position="235"/>
    </location>
</feature>
<feature type="transmembrane region" description="Helical; Name=6" evidence="3">
    <location>
        <begin position="236"/>
        <end position="260"/>
    </location>
</feature>
<feature type="topological domain" description="Extracellular" evidence="3">
    <location>
        <begin position="261"/>
        <end position="277"/>
    </location>
</feature>
<feature type="transmembrane region" description="Helical; Name=7" evidence="3">
    <location>
        <begin position="278"/>
        <end position="301"/>
    </location>
</feature>
<feature type="topological domain" description="Cytoplasmic" evidence="3">
    <location>
        <begin position="302"/>
        <end position="352"/>
    </location>
</feature>
<feature type="modified residue" description="Sulfotyrosine" evidence="1">
    <location>
        <position position="3"/>
    </location>
</feature>
<feature type="modified residue" description="Sulfotyrosine" evidence="3">
    <location>
        <position position="10"/>
    </location>
</feature>
<feature type="modified residue" description="Sulfotyrosine" evidence="3">
    <location>
        <position position="14"/>
    </location>
</feature>
<feature type="modified residue" description="Sulfotyrosine" evidence="3">
    <location>
        <position position="15"/>
    </location>
</feature>
<feature type="modified residue" description="Phosphoserine; by BARK1" evidence="1">
    <location>
        <position position="336"/>
    </location>
</feature>
<feature type="modified residue" description="Phosphoserine; by BARK1" evidence="1">
    <location>
        <position position="337"/>
    </location>
</feature>
<feature type="modified residue" description="Phosphoserine; by BARK1" evidence="1">
    <location>
        <position position="342"/>
    </location>
</feature>
<feature type="modified residue" description="Phosphoserine; by BARK1" evidence="1">
    <location>
        <position position="349"/>
    </location>
</feature>
<feature type="lipid moiety-binding region" description="S-palmitoyl cysteine" evidence="1">
    <location>
        <position position="321"/>
    </location>
</feature>
<feature type="lipid moiety-binding region" description="S-palmitoyl cysteine" evidence="1">
    <location>
        <position position="323"/>
    </location>
</feature>
<feature type="lipid moiety-binding region" description="S-palmitoyl cysteine" evidence="1">
    <location>
        <position position="324"/>
    </location>
</feature>
<feature type="glycosylation site" description="O-linked (GalNAc...) serine" evidence="1">
    <location>
        <position position="6"/>
    </location>
</feature>
<feature type="glycosylation site" description="O-linked (GalNAc...) serine" evidence="1">
    <location>
        <position position="7"/>
    </location>
</feature>
<feature type="disulfide bond" evidence="1">
    <location>
        <begin position="20"/>
        <end position="269"/>
    </location>
</feature>
<feature type="disulfide bond" evidence="4">
    <location>
        <begin position="101"/>
        <end position="178"/>
    </location>
</feature>
<reference key="1">
    <citation type="journal article" date="1999" name="Mol. Biol. Evol.">
        <title>Sequence evolution of the CCR5 chemokine receptor gene in primates.</title>
        <authorList>
            <person name="Zhang Y.-W."/>
            <person name="Ryder O.A."/>
            <person name="Zhang Y.-P."/>
        </authorList>
    </citation>
    <scope>NUCLEOTIDE SEQUENCE [GENOMIC DNA]</scope>
</reference>
<protein>
    <recommendedName>
        <fullName>C-C chemokine receptor type 5</fullName>
        <shortName>C-C CKR-5</shortName>
        <shortName>CC-CKR-5</shortName>
        <shortName>CCR-5</shortName>
        <shortName>CCR5</shortName>
    </recommendedName>
    <cdAntigenName>CD195</cdAntigenName>
</protein>
<keyword id="KW-1003">Cell membrane</keyword>
<keyword id="KW-1015">Disulfide bond</keyword>
<keyword id="KW-0297">G-protein coupled receptor</keyword>
<keyword id="KW-0325">Glycoprotein</keyword>
<keyword id="KW-0449">Lipoprotein</keyword>
<keyword id="KW-0472">Membrane</keyword>
<keyword id="KW-0564">Palmitate</keyword>
<keyword id="KW-0597">Phosphoprotein</keyword>
<keyword id="KW-0675">Receptor</keyword>
<keyword id="KW-1185">Reference proteome</keyword>
<keyword id="KW-0765">Sulfation</keyword>
<keyword id="KW-0807">Transducer</keyword>
<keyword id="KW-0812">Transmembrane</keyword>
<keyword id="KW-1133">Transmembrane helix</keyword>
<proteinExistence type="inferred from homology"/>
<comment type="function">
    <text evidence="1">Receptor for a number of inflammatory CC-chemokines including CCL3/MIP-1-alpha, CCL4/MIP-1-beta and RANTES and subsequently transduces a signal by increasing the intracellular calcium ion level. May play a role in the control of granulocytic lineage proliferation or differentiation. Participates in T-lymphocyte migration to the infection site by acting as a chemotactic receptor.</text>
</comment>
<comment type="subunit">
    <text evidence="1">Interacts with PRAF2. Efficient ligand binding to CCL3/MIP-1alpha and CCL4/MIP-1beta requires sulfation, O-glycosylation and sialic acid modifications. Glycosylation on Ser-6 is required for efficient binding of CCL4. Interacts with GRK2. Interacts with ARRB1 and ARRB2. Interacts with CNIH4. Interacts with S100A4; this interaction stimulates T-lymphocyte chemotaxis.</text>
</comment>
<comment type="subcellular location">
    <subcellularLocation>
        <location evidence="2">Cell membrane</location>
        <topology evidence="2">Multi-pass membrane protein</topology>
    </subcellularLocation>
</comment>
<comment type="PTM">
    <text evidence="1">Sulfated on at least 2 of the N-terminal tyrosines. Sulfation is required for efficient binding of the chemokines, CCL3 and CCL4 (By similarity).</text>
</comment>
<comment type="PTM">
    <text evidence="1">Palmitoylation in the C-terminal is important for cell surface expression.</text>
</comment>
<comment type="PTM">
    <text evidence="1">Phosphorylation on serine residues in the C-terminal is stimulated by binding CC chemokines especially by APO-RANTES.</text>
</comment>
<comment type="PTM">
    <text evidence="1">O-glycosylated, but not N-glycosylated. Ser-6 appears to be the major site even if Ser-7 may be also O-glycosylated. Also sialylated glycans present which contribute to chemokine binding. Thr-16 and Ser-17 may also be glycosylated and, if so, with small moieties such as a T-antigen.</text>
</comment>
<comment type="similarity">
    <text evidence="4">Belongs to the G-protein coupled receptor 1 family.</text>
</comment>
<gene>
    <name type="primary">CCR5</name>
    <name type="synonym">CMKBR5</name>
</gene>
<dbReference type="EMBL" id="AF177895">
    <property type="protein sequence ID" value="AAK43378.1"/>
    <property type="molecule type" value="Genomic_DNA"/>
</dbReference>
<dbReference type="RefSeq" id="NP_001128969.1">
    <property type="nucleotide sequence ID" value="NM_001135497.1"/>
</dbReference>
<dbReference type="RefSeq" id="XP_009234008.3">
    <property type="nucleotide sequence ID" value="XM_009235733.4"/>
</dbReference>
<dbReference type="RefSeq" id="XP_009234009.1">
    <property type="nucleotide sequence ID" value="XM_009235734.1"/>
</dbReference>
<dbReference type="SMR" id="P61756"/>
<dbReference type="FunCoup" id="P61756">
    <property type="interactions" value="985"/>
</dbReference>
<dbReference type="STRING" id="9601.ENSPPYP00000016199"/>
<dbReference type="GlyCosmos" id="P61756">
    <property type="glycosylation" value="2 sites, No reported glycans"/>
</dbReference>
<dbReference type="Ensembl" id="ENSPPYT00000016851.2">
    <property type="protein sequence ID" value="ENSPPYP00000016199.1"/>
    <property type="gene ID" value="ENSPPYG00000014492.3"/>
</dbReference>
<dbReference type="GeneID" id="100190809"/>
<dbReference type="KEGG" id="pon:100190809"/>
<dbReference type="CTD" id="1234"/>
<dbReference type="eggNOG" id="KOG3656">
    <property type="taxonomic scope" value="Eukaryota"/>
</dbReference>
<dbReference type="GeneTree" id="ENSGT01020000230359"/>
<dbReference type="HOGENOM" id="CLU_009579_8_3_1"/>
<dbReference type="InParanoid" id="P61756"/>
<dbReference type="OMA" id="HYTCSPH"/>
<dbReference type="OrthoDB" id="9876908at2759"/>
<dbReference type="TreeFam" id="TF330966"/>
<dbReference type="Proteomes" id="UP000001595">
    <property type="component" value="Chromosome 3"/>
</dbReference>
<dbReference type="GO" id="GO:0005768">
    <property type="term" value="C:endosome"/>
    <property type="evidence" value="ECO:0007669"/>
    <property type="project" value="Ensembl"/>
</dbReference>
<dbReference type="GO" id="GO:0009897">
    <property type="term" value="C:external side of plasma membrane"/>
    <property type="evidence" value="ECO:0000250"/>
    <property type="project" value="UniProtKB"/>
</dbReference>
<dbReference type="GO" id="GO:0003779">
    <property type="term" value="F:actin binding"/>
    <property type="evidence" value="ECO:0007669"/>
    <property type="project" value="Ensembl"/>
</dbReference>
<dbReference type="GO" id="GO:0016493">
    <property type="term" value="F:C-C chemokine receptor activity"/>
    <property type="evidence" value="ECO:0000250"/>
    <property type="project" value="UniProtKB"/>
</dbReference>
<dbReference type="GO" id="GO:0071791">
    <property type="term" value="F:chemokine (C-C motif) ligand 5 binding"/>
    <property type="evidence" value="ECO:0007669"/>
    <property type="project" value="Ensembl"/>
</dbReference>
<dbReference type="GO" id="GO:0042802">
    <property type="term" value="F:identical protein binding"/>
    <property type="evidence" value="ECO:0007669"/>
    <property type="project" value="Ensembl"/>
</dbReference>
<dbReference type="GO" id="GO:0019722">
    <property type="term" value="P:calcium-mediated signaling"/>
    <property type="evidence" value="ECO:0007669"/>
    <property type="project" value="Ensembl"/>
</dbReference>
<dbReference type="GO" id="GO:0060326">
    <property type="term" value="P:cell chemotaxis"/>
    <property type="evidence" value="ECO:0007669"/>
    <property type="project" value="TreeGrafter"/>
</dbReference>
<dbReference type="GO" id="GO:0007267">
    <property type="term" value="P:cell-cell signaling"/>
    <property type="evidence" value="ECO:0007669"/>
    <property type="project" value="Ensembl"/>
</dbReference>
<dbReference type="GO" id="GO:0071222">
    <property type="term" value="P:cellular response to lipopolysaccharide"/>
    <property type="evidence" value="ECO:0007669"/>
    <property type="project" value="Ensembl"/>
</dbReference>
<dbReference type="GO" id="GO:0006955">
    <property type="term" value="P:immune response"/>
    <property type="evidence" value="ECO:0007669"/>
    <property type="project" value="InterPro"/>
</dbReference>
<dbReference type="GO" id="GO:0006954">
    <property type="term" value="P:inflammatory response"/>
    <property type="evidence" value="ECO:0007669"/>
    <property type="project" value="InterPro"/>
</dbReference>
<dbReference type="GO" id="GO:0000165">
    <property type="term" value="P:MAPK cascade"/>
    <property type="evidence" value="ECO:0007669"/>
    <property type="project" value="Ensembl"/>
</dbReference>
<dbReference type="GO" id="GO:0007204">
    <property type="term" value="P:positive regulation of cytosolic calcium ion concentration"/>
    <property type="evidence" value="ECO:0007669"/>
    <property type="project" value="TreeGrafter"/>
</dbReference>
<dbReference type="GO" id="GO:0014808">
    <property type="term" value="P:release of sequestered calcium ion into cytosol by sarcoplasmic reticulum"/>
    <property type="evidence" value="ECO:0007669"/>
    <property type="project" value="Ensembl"/>
</dbReference>
<dbReference type="GO" id="GO:0070723">
    <property type="term" value="P:response to cholesterol"/>
    <property type="evidence" value="ECO:0007669"/>
    <property type="project" value="Ensembl"/>
</dbReference>
<dbReference type="CDD" id="cd15184">
    <property type="entry name" value="7tmA_CCR5_CCR2"/>
    <property type="match status" value="1"/>
</dbReference>
<dbReference type="FunFam" id="1.20.1070.10:FF:000026">
    <property type="entry name" value="C-C chemokine receptor type 5"/>
    <property type="match status" value="1"/>
</dbReference>
<dbReference type="Gene3D" id="1.20.1070.10">
    <property type="entry name" value="Rhodopsin 7-helix transmembrane proteins"/>
    <property type="match status" value="1"/>
</dbReference>
<dbReference type="InterPro" id="IPR050119">
    <property type="entry name" value="CCR1-9-like"/>
</dbReference>
<dbReference type="InterPro" id="IPR002240">
    <property type="entry name" value="Chemokine_CCR5"/>
</dbReference>
<dbReference type="InterPro" id="IPR000355">
    <property type="entry name" value="Chemokine_rcpt"/>
</dbReference>
<dbReference type="InterPro" id="IPR000276">
    <property type="entry name" value="GPCR_Rhodpsn"/>
</dbReference>
<dbReference type="InterPro" id="IPR017452">
    <property type="entry name" value="GPCR_Rhodpsn_7TM"/>
</dbReference>
<dbReference type="PANTHER" id="PTHR10489:SF686">
    <property type="entry name" value="C-C CHEMOKINE RECEPTOR TYPE 5"/>
    <property type="match status" value="1"/>
</dbReference>
<dbReference type="PANTHER" id="PTHR10489">
    <property type="entry name" value="CELL ADHESION MOLECULE"/>
    <property type="match status" value="1"/>
</dbReference>
<dbReference type="Pfam" id="PF00001">
    <property type="entry name" value="7tm_1"/>
    <property type="match status" value="1"/>
</dbReference>
<dbReference type="PRINTS" id="PR00657">
    <property type="entry name" value="CCCHEMOKINER"/>
</dbReference>
<dbReference type="PRINTS" id="PR01110">
    <property type="entry name" value="CHEMOKINER5"/>
</dbReference>
<dbReference type="PRINTS" id="PR00237">
    <property type="entry name" value="GPCRRHODOPSN"/>
</dbReference>
<dbReference type="SUPFAM" id="SSF81321">
    <property type="entry name" value="Family A G protein-coupled receptor-like"/>
    <property type="match status" value="1"/>
</dbReference>
<dbReference type="PROSITE" id="PS00237">
    <property type="entry name" value="G_PROTEIN_RECEP_F1_1"/>
    <property type="match status" value="1"/>
</dbReference>
<dbReference type="PROSITE" id="PS50262">
    <property type="entry name" value="G_PROTEIN_RECEP_F1_2"/>
    <property type="match status" value="1"/>
</dbReference>
<sequence>MDYQVSSPTYDIDYYTSEPCQKINVKQIAARLLPPLYSLVFIFGFVGNMLVILILINCKRLKSMTDIYLLNLAISDLFFLLTVPFWAHYAAAQWDFGNTMCQLLTGLYFIGFFSGIFFIILLTIDRYLAIVHAVFALKARTVTFGVVTSVITWVVAVFASLPGIIFTRSQKEGLHYTCSSHFPYSQYQFWKNFQTLKIVILGLVLPLLVMVICYSGILKTLLRCRNEKKRHRAVRLIFTIMIVYFLFWAPYNIVLLLNTFQEFFGLNNCSSSNRLDQAMQVTETLGMTHCCINPIIYAFVGEKFRNYLLVFFQKHIAKRFCKCCSIFQQEAPERASSVYTRSTGEQEISVGL</sequence>
<organism>
    <name type="scientific">Pongo abelii</name>
    <name type="common">Sumatran orangutan</name>
    <name type="synonym">Pongo pygmaeus abelii</name>
    <dbReference type="NCBI Taxonomy" id="9601"/>
    <lineage>
        <taxon>Eukaryota</taxon>
        <taxon>Metazoa</taxon>
        <taxon>Chordata</taxon>
        <taxon>Craniata</taxon>
        <taxon>Vertebrata</taxon>
        <taxon>Euteleostomi</taxon>
        <taxon>Mammalia</taxon>
        <taxon>Eutheria</taxon>
        <taxon>Euarchontoglires</taxon>
        <taxon>Primates</taxon>
        <taxon>Haplorrhini</taxon>
        <taxon>Catarrhini</taxon>
        <taxon>Hominidae</taxon>
        <taxon>Pongo</taxon>
    </lineage>
</organism>
<accession>P61756</accession>
<evidence type="ECO:0000250" key="1">
    <source>
        <dbReference type="UniProtKB" id="P51681"/>
    </source>
</evidence>
<evidence type="ECO:0000250" key="2">
    <source>
        <dbReference type="UniProtKB" id="Q9XT76"/>
    </source>
</evidence>
<evidence type="ECO:0000255" key="3"/>
<evidence type="ECO:0000255" key="4">
    <source>
        <dbReference type="PROSITE-ProRule" id="PRU00521"/>
    </source>
</evidence>